<evidence type="ECO:0000250" key="1">
    <source>
        <dbReference type="UniProtKB" id="P0A9S5"/>
    </source>
</evidence>
<evidence type="ECO:0000250" key="2">
    <source>
        <dbReference type="UniProtKB" id="P32816"/>
    </source>
</evidence>
<evidence type="ECO:0000305" key="3"/>
<name>GLDA_ECOL6</name>
<sequence length="367" mass="38712">MDRIIQSPGKYIQGADVINRLGEYLKPLAERWLVVGDKFVLGFAQSTVEKSFKDAGLVVEIAPFGGECSQNEIDRLRGIAETAQCGAILGIGGGKTLDTAKALAHFMGVPVAIAPTIASTDAPCSALSVIYTDEGEFDRYLLLPNNPNMVIVDTKIVAGAPARLLAAGIGDALATWFEARACSRSGATTMAGGKCTQAALALAELCYNTLLEEGEKAMLAAEQHVVTPALERVIEANTYLSGVGFESGGLAAAHAVHNGLTAIPDAHHYYHGEKVAFGTLTQLVLENAPVEEIETVAALSHAVGLPITLAQLDIKEDVPAKMRIVAEAACAEGETIHNMPGGATPDQVYAALLVADQYGQRFLQEWE</sequence>
<protein>
    <recommendedName>
        <fullName evidence="1">Glycerol dehydrogenase</fullName>
        <shortName evidence="1">GDH</shortName>
        <shortName evidence="1">GLDH</shortName>
        <ecNumber evidence="1">1.1.1.6</ecNumber>
    </recommendedName>
</protein>
<keyword id="KW-0319">Glycerol metabolism</keyword>
<keyword id="KW-0479">Metal-binding</keyword>
<keyword id="KW-0520">NAD</keyword>
<keyword id="KW-0560">Oxidoreductase</keyword>
<keyword id="KW-1185">Reference proteome</keyword>
<keyword id="KW-0862">Zinc</keyword>
<comment type="function">
    <text evidence="1">Catalyzes the NAD-dependent oxidation of glycerol to dihydroxyacetone (glycerone). Allows microorganisms to utilize glycerol as a source of carbon under anaerobic conditions.</text>
</comment>
<comment type="catalytic activity">
    <reaction evidence="1">
        <text>glycerol + NAD(+) = dihydroxyacetone + NADH + H(+)</text>
        <dbReference type="Rhea" id="RHEA:13769"/>
        <dbReference type="ChEBI" id="CHEBI:15378"/>
        <dbReference type="ChEBI" id="CHEBI:16016"/>
        <dbReference type="ChEBI" id="CHEBI:17754"/>
        <dbReference type="ChEBI" id="CHEBI:57540"/>
        <dbReference type="ChEBI" id="CHEBI:57945"/>
        <dbReference type="EC" id="1.1.1.6"/>
    </reaction>
</comment>
<comment type="cofactor">
    <cofactor evidence="1">
        <name>Zn(2+)</name>
        <dbReference type="ChEBI" id="CHEBI:29105"/>
    </cofactor>
    <text evidence="1">Binds 1 zinc ion per subunit.</text>
</comment>
<comment type="pathway">
    <text>Polyol metabolism; glycerol fermentation; glycerone phosphate from glycerol (oxidative route): step 1/2.</text>
</comment>
<comment type="similarity">
    <text evidence="3">Belongs to the iron-containing alcohol dehydrogenase family.</text>
</comment>
<comment type="sequence caution" evidence="3">
    <conflict type="erroneous initiation">
        <sequence resource="EMBL-CDS" id="AAN83332"/>
    </conflict>
</comment>
<proteinExistence type="inferred from homology"/>
<gene>
    <name type="primary">gldA</name>
    <name type="ordered locus">c4904</name>
</gene>
<organism>
    <name type="scientific">Escherichia coli O6:H1 (strain CFT073 / ATCC 700928 / UPEC)</name>
    <dbReference type="NCBI Taxonomy" id="199310"/>
    <lineage>
        <taxon>Bacteria</taxon>
        <taxon>Pseudomonadati</taxon>
        <taxon>Pseudomonadota</taxon>
        <taxon>Gammaproteobacteria</taxon>
        <taxon>Enterobacterales</taxon>
        <taxon>Enterobacteriaceae</taxon>
        <taxon>Escherichia</taxon>
    </lineage>
</organism>
<dbReference type="EC" id="1.1.1.6" evidence="1"/>
<dbReference type="EMBL" id="AE014075">
    <property type="protein sequence ID" value="AAN83332.1"/>
    <property type="status" value="ALT_INIT"/>
    <property type="molecule type" value="Genomic_DNA"/>
</dbReference>
<dbReference type="RefSeq" id="WP_000374004.1">
    <property type="nucleotide sequence ID" value="NZ_CP051263.1"/>
</dbReference>
<dbReference type="SMR" id="P0A9S6"/>
<dbReference type="STRING" id="199310.c4904"/>
<dbReference type="GeneID" id="75203224"/>
<dbReference type="KEGG" id="ecc:c4904"/>
<dbReference type="eggNOG" id="COG0371">
    <property type="taxonomic scope" value="Bacteria"/>
</dbReference>
<dbReference type="HOGENOM" id="CLU_044754_1_0_6"/>
<dbReference type="UniPathway" id="UPA00617">
    <property type="reaction ID" value="UER00668"/>
</dbReference>
<dbReference type="Proteomes" id="UP000001410">
    <property type="component" value="Chromosome"/>
</dbReference>
<dbReference type="GO" id="GO:0005829">
    <property type="term" value="C:cytosol"/>
    <property type="evidence" value="ECO:0007669"/>
    <property type="project" value="TreeGrafter"/>
</dbReference>
<dbReference type="GO" id="GO:0008888">
    <property type="term" value="F:glycerol dehydrogenase (NAD+) activity"/>
    <property type="evidence" value="ECO:0007669"/>
    <property type="project" value="UniProtKB-EC"/>
</dbReference>
<dbReference type="GO" id="GO:0046872">
    <property type="term" value="F:metal ion binding"/>
    <property type="evidence" value="ECO:0007669"/>
    <property type="project" value="UniProtKB-KW"/>
</dbReference>
<dbReference type="GO" id="GO:0019588">
    <property type="term" value="P:anaerobic glycerol catabolic process"/>
    <property type="evidence" value="ECO:0007669"/>
    <property type="project" value="UniProtKB-UniPathway"/>
</dbReference>
<dbReference type="CDD" id="cd08170">
    <property type="entry name" value="GlyDH"/>
    <property type="match status" value="1"/>
</dbReference>
<dbReference type="FunFam" id="1.20.1090.10:FF:000004">
    <property type="entry name" value="Glycerol dehydrogenase"/>
    <property type="match status" value="1"/>
</dbReference>
<dbReference type="FunFam" id="3.40.50.1970:FF:000005">
    <property type="entry name" value="Glycerol dehydrogenase"/>
    <property type="match status" value="1"/>
</dbReference>
<dbReference type="Gene3D" id="3.40.50.1970">
    <property type="match status" value="1"/>
</dbReference>
<dbReference type="Gene3D" id="1.20.1090.10">
    <property type="entry name" value="Dehydroquinate synthase-like - alpha domain"/>
    <property type="match status" value="1"/>
</dbReference>
<dbReference type="InterPro" id="IPR001670">
    <property type="entry name" value="ADH_Fe/GldA"/>
</dbReference>
<dbReference type="InterPro" id="IPR018211">
    <property type="entry name" value="ADH_Fe_CS"/>
</dbReference>
<dbReference type="InterPro" id="IPR016205">
    <property type="entry name" value="Glycerol_DH"/>
</dbReference>
<dbReference type="NCBIfam" id="NF006941">
    <property type="entry name" value="PRK09423.1"/>
    <property type="match status" value="1"/>
</dbReference>
<dbReference type="PANTHER" id="PTHR43616">
    <property type="entry name" value="GLYCEROL DEHYDROGENASE"/>
    <property type="match status" value="1"/>
</dbReference>
<dbReference type="PANTHER" id="PTHR43616:SF5">
    <property type="entry name" value="GLYCEROL DEHYDROGENASE 1"/>
    <property type="match status" value="1"/>
</dbReference>
<dbReference type="Pfam" id="PF00465">
    <property type="entry name" value="Fe-ADH"/>
    <property type="match status" value="1"/>
</dbReference>
<dbReference type="PIRSF" id="PIRSF000112">
    <property type="entry name" value="Glycerol_dehydrogenase"/>
    <property type="match status" value="1"/>
</dbReference>
<dbReference type="SUPFAM" id="SSF56796">
    <property type="entry name" value="Dehydroquinate synthase-like"/>
    <property type="match status" value="1"/>
</dbReference>
<dbReference type="PROSITE" id="PS00913">
    <property type="entry name" value="ADH_IRON_1"/>
    <property type="match status" value="1"/>
</dbReference>
<dbReference type="PROSITE" id="PS00060">
    <property type="entry name" value="ADH_IRON_2"/>
    <property type="match status" value="1"/>
</dbReference>
<reference key="1">
    <citation type="journal article" date="2002" name="Proc. Natl. Acad. Sci. U.S.A.">
        <title>Extensive mosaic structure revealed by the complete genome sequence of uropathogenic Escherichia coli.</title>
        <authorList>
            <person name="Welch R.A."/>
            <person name="Burland V."/>
            <person name="Plunkett G. III"/>
            <person name="Redford P."/>
            <person name="Roesch P."/>
            <person name="Rasko D."/>
            <person name="Buckles E.L."/>
            <person name="Liou S.-R."/>
            <person name="Boutin A."/>
            <person name="Hackett J."/>
            <person name="Stroud D."/>
            <person name="Mayhew G.F."/>
            <person name="Rose D.J."/>
            <person name="Zhou S."/>
            <person name="Schwartz D.C."/>
            <person name="Perna N.T."/>
            <person name="Mobley H.L.T."/>
            <person name="Donnenberg M.S."/>
            <person name="Blattner F.R."/>
        </authorList>
    </citation>
    <scope>NUCLEOTIDE SEQUENCE [LARGE SCALE GENOMIC DNA]</scope>
    <source>
        <strain>CFT073 / ATCC 700928 / UPEC</strain>
    </source>
</reference>
<feature type="chain" id="PRO_0000087829" description="Glycerol dehydrogenase">
    <location>
        <begin position="1"/>
        <end position="367"/>
    </location>
</feature>
<feature type="binding site" evidence="2">
    <location>
        <position position="37"/>
    </location>
    <ligand>
        <name>NAD(+)</name>
        <dbReference type="ChEBI" id="CHEBI:57540"/>
    </ligand>
</feature>
<feature type="binding site" evidence="2">
    <location>
        <position position="94"/>
    </location>
    <ligand>
        <name>NAD(+)</name>
        <dbReference type="ChEBI" id="CHEBI:57540"/>
    </ligand>
</feature>
<feature type="binding site" evidence="2">
    <location>
        <position position="95"/>
    </location>
    <ligand>
        <name>NAD(+)</name>
        <dbReference type="ChEBI" id="CHEBI:57540"/>
    </ligand>
</feature>
<feature type="binding site" evidence="2">
    <location>
        <position position="116"/>
    </location>
    <ligand>
        <name>NAD(+)</name>
        <dbReference type="ChEBI" id="CHEBI:57540"/>
    </ligand>
</feature>
<feature type="binding site" evidence="2">
    <location>
        <position position="119"/>
    </location>
    <ligand>
        <name>NAD(+)</name>
        <dbReference type="ChEBI" id="CHEBI:57540"/>
    </ligand>
</feature>
<feature type="binding site" evidence="1">
    <location>
        <position position="121"/>
    </location>
    <ligand>
        <name>glycerol</name>
        <dbReference type="ChEBI" id="CHEBI:17754"/>
    </ligand>
</feature>
<feature type="binding site" evidence="2">
    <location>
        <position position="125"/>
    </location>
    <ligand>
        <name>NAD(+)</name>
        <dbReference type="ChEBI" id="CHEBI:57540"/>
    </ligand>
</feature>
<feature type="binding site" evidence="2">
    <location>
        <position position="127"/>
    </location>
    <ligand>
        <name>NAD(+)</name>
        <dbReference type="ChEBI" id="CHEBI:57540"/>
    </ligand>
</feature>
<feature type="binding site" evidence="2">
    <location>
        <position position="131"/>
    </location>
    <ligand>
        <name>NAD(+)</name>
        <dbReference type="ChEBI" id="CHEBI:57540"/>
    </ligand>
</feature>
<feature type="binding site" evidence="1">
    <location>
        <position position="171"/>
    </location>
    <ligand>
        <name>Zn(2+)</name>
        <dbReference type="ChEBI" id="CHEBI:29105"/>
        <note>catalytic</note>
    </ligand>
</feature>
<feature type="binding site" evidence="1">
    <location>
        <position position="254"/>
    </location>
    <ligand>
        <name>glycerol</name>
        <dbReference type="ChEBI" id="CHEBI:17754"/>
    </ligand>
</feature>
<feature type="binding site" evidence="1">
    <location>
        <position position="254"/>
    </location>
    <ligand>
        <name>Zn(2+)</name>
        <dbReference type="ChEBI" id="CHEBI:29105"/>
        <note>catalytic</note>
    </ligand>
</feature>
<feature type="binding site" evidence="1">
    <location>
        <position position="271"/>
    </location>
    <ligand>
        <name>Zn(2+)</name>
        <dbReference type="ChEBI" id="CHEBI:29105"/>
        <note>catalytic</note>
    </ligand>
</feature>
<accession>P0A9S6</accession>
<accession>P32665</accession>
<accession>P78132</accession>